<organism>
    <name type="scientific">Staphylococcus haemolyticus (strain JCSC1435)</name>
    <dbReference type="NCBI Taxonomy" id="279808"/>
    <lineage>
        <taxon>Bacteria</taxon>
        <taxon>Bacillati</taxon>
        <taxon>Bacillota</taxon>
        <taxon>Bacilli</taxon>
        <taxon>Bacillales</taxon>
        <taxon>Staphylococcaceae</taxon>
        <taxon>Staphylococcus</taxon>
    </lineage>
</organism>
<dbReference type="EC" id="3.1.26.3" evidence="1"/>
<dbReference type="EMBL" id="AP006716">
    <property type="protein sequence ID" value="BAE04990.1"/>
    <property type="molecule type" value="Genomic_DNA"/>
</dbReference>
<dbReference type="RefSeq" id="WP_011275967.1">
    <property type="nucleotide sequence ID" value="NC_007168.1"/>
</dbReference>
<dbReference type="SMR" id="Q4L5T5"/>
<dbReference type="GeneID" id="93781059"/>
<dbReference type="KEGG" id="sha:SH1681"/>
<dbReference type="eggNOG" id="COG0571">
    <property type="taxonomic scope" value="Bacteria"/>
</dbReference>
<dbReference type="HOGENOM" id="CLU_000907_1_3_9"/>
<dbReference type="OrthoDB" id="9805026at2"/>
<dbReference type="Proteomes" id="UP000000543">
    <property type="component" value="Chromosome"/>
</dbReference>
<dbReference type="GO" id="GO:0005737">
    <property type="term" value="C:cytoplasm"/>
    <property type="evidence" value="ECO:0007669"/>
    <property type="project" value="UniProtKB-SubCell"/>
</dbReference>
<dbReference type="GO" id="GO:0003725">
    <property type="term" value="F:double-stranded RNA binding"/>
    <property type="evidence" value="ECO:0007669"/>
    <property type="project" value="TreeGrafter"/>
</dbReference>
<dbReference type="GO" id="GO:0046872">
    <property type="term" value="F:metal ion binding"/>
    <property type="evidence" value="ECO:0007669"/>
    <property type="project" value="UniProtKB-KW"/>
</dbReference>
<dbReference type="GO" id="GO:0004525">
    <property type="term" value="F:ribonuclease III activity"/>
    <property type="evidence" value="ECO:0007669"/>
    <property type="project" value="UniProtKB-UniRule"/>
</dbReference>
<dbReference type="GO" id="GO:0019843">
    <property type="term" value="F:rRNA binding"/>
    <property type="evidence" value="ECO:0007669"/>
    <property type="project" value="UniProtKB-KW"/>
</dbReference>
<dbReference type="GO" id="GO:0006397">
    <property type="term" value="P:mRNA processing"/>
    <property type="evidence" value="ECO:0007669"/>
    <property type="project" value="UniProtKB-UniRule"/>
</dbReference>
<dbReference type="GO" id="GO:0010468">
    <property type="term" value="P:regulation of gene expression"/>
    <property type="evidence" value="ECO:0007669"/>
    <property type="project" value="TreeGrafter"/>
</dbReference>
<dbReference type="GO" id="GO:0006364">
    <property type="term" value="P:rRNA processing"/>
    <property type="evidence" value="ECO:0007669"/>
    <property type="project" value="UniProtKB-UniRule"/>
</dbReference>
<dbReference type="GO" id="GO:0008033">
    <property type="term" value="P:tRNA processing"/>
    <property type="evidence" value="ECO:0007669"/>
    <property type="project" value="UniProtKB-KW"/>
</dbReference>
<dbReference type="CDD" id="cd10845">
    <property type="entry name" value="DSRM_RNAse_III_family"/>
    <property type="match status" value="1"/>
</dbReference>
<dbReference type="CDD" id="cd00593">
    <property type="entry name" value="RIBOc"/>
    <property type="match status" value="1"/>
</dbReference>
<dbReference type="FunFam" id="1.10.1520.10:FF:000001">
    <property type="entry name" value="Ribonuclease 3"/>
    <property type="match status" value="1"/>
</dbReference>
<dbReference type="FunFam" id="3.30.160.20:FF:000003">
    <property type="entry name" value="Ribonuclease 3"/>
    <property type="match status" value="1"/>
</dbReference>
<dbReference type="Gene3D" id="3.30.160.20">
    <property type="match status" value="1"/>
</dbReference>
<dbReference type="Gene3D" id="1.10.1520.10">
    <property type="entry name" value="Ribonuclease III domain"/>
    <property type="match status" value="1"/>
</dbReference>
<dbReference type="HAMAP" id="MF_00104">
    <property type="entry name" value="RNase_III"/>
    <property type="match status" value="1"/>
</dbReference>
<dbReference type="InterPro" id="IPR014720">
    <property type="entry name" value="dsRBD_dom"/>
</dbReference>
<dbReference type="InterPro" id="IPR011907">
    <property type="entry name" value="RNase_III"/>
</dbReference>
<dbReference type="InterPro" id="IPR000999">
    <property type="entry name" value="RNase_III_dom"/>
</dbReference>
<dbReference type="InterPro" id="IPR036389">
    <property type="entry name" value="RNase_III_sf"/>
</dbReference>
<dbReference type="NCBIfam" id="TIGR02191">
    <property type="entry name" value="RNaseIII"/>
    <property type="match status" value="1"/>
</dbReference>
<dbReference type="PANTHER" id="PTHR11207:SF0">
    <property type="entry name" value="RIBONUCLEASE 3"/>
    <property type="match status" value="1"/>
</dbReference>
<dbReference type="PANTHER" id="PTHR11207">
    <property type="entry name" value="RIBONUCLEASE III"/>
    <property type="match status" value="1"/>
</dbReference>
<dbReference type="Pfam" id="PF00035">
    <property type="entry name" value="dsrm"/>
    <property type="match status" value="1"/>
</dbReference>
<dbReference type="Pfam" id="PF14622">
    <property type="entry name" value="Ribonucleas_3_3"/>
    <property type="match status" value="1"/>
</dbReference>
<dbReference type="SMART" id="SM00358">
    <property type="entry name" value="DSRM"/>
    <property type="match status" value="1"/>
</dbReference>
<dbReference type="SMART" id="SM00535">
    <property type="entry name" value="RIBOc"/>
    <property type="match status" value="1"/>
</dbReference>
<dbReference type="SUPFAM" id="SSF54768">
    <property type="entry name" value="dsRNA-binding domain-like"/>
    <property type="match status" value="1"/>
</dbReference>
<dbReference type="SUPFAM" id="SSF69065">
    <property type="entry name" value="RNase III domain-like"/>
    <property type="match status" value="1"/>
</dbReference>
<dbReference type="PROSITE" id="PS50137">
    <property type="entry name" value="DS_RBD"/>
    <property type="match status" value="1"/>
</dbReference>
<dbReference type="PROSITE" id="PS00517">
    <property type="entry name" value="RNASE_3_1"/>
    <property type="match status" value="1"/>
</dbReference>
<dbReference type="PROSITE" id="PS50142">
    <property type="entry name" value="RNASE_3_2"/>
    <property type="match status" value="1"/>
</dbReference>
<keyword id="KW-0963">Cytoplasm</keyword>
<keyword id="KW-0255">Endonuclease</keyword>
<keyword id="KW-0378">Hydrolase</keyword>
<keyword id="KW-0460">Magnesium</keyword>
<keyword id="KW-0479">Metal-binding</keyword>
<keyword id="KW-0507">mRNA processing</keyword>
<keyword id="KW-0540">Nuclease</keyword>
<keyword id="KW-0694">RNA-binding</keyword>
<keyword id="KW-0698">rRNA processing</keyword>
<keyword id="KW-0699">rRNA-binding</keyword>
<keyword id="KW-0819">tRNA processing</keyword>
<name>RNC_STAHJ</name>
<accession>Q4L5T5</accession>
<sequence>MTNPKKIEMVNDFQQQFAKKMNELGFTYSNIDLYQQAFSHSSFINDFNMDRLAHNERLEFLGDAVLELTVSRYLFDKHPDLPEGNLTKMRATIVCEPSLVIFANKIELNQLILLGKGEEKTGGRTRPSLVSDAFEAFVGALYLDQGLDVVWQFAEKVIFPYVEDDELVGVVDFKTQFQEYVHSQNRGDVTYRLIKEEGPAHHRLFTSEVILENEAVATGQGKTKKESEQKAAESAYSKLKSNNNL</sequence>
<protein>
    <recommendedName>
        <fullName evidence="1">Ribonuclease 3</fullName>
        <ecNumber evidence="1">3.1.26.3</ecNumber>
    </recommendedName>
    <alternativeName>
        <fullName evidence="1">Ribonuclease III</fullName>
        <shortName evidence="1">RNase III</shortName>
    </alternativeName>
</protein>
<evidence type="ECO:0000255" key="1">
    <source>
        <dbReference type="HAMAP-Rule" id="MF_00104"/>
    </source>
</evidence>
<evidence type="ECO:0000256" key="2">
    <source>
        <dbReference type="SAM" id="MobiDB-lite"/>
    </source>
</evidence>
<reference key="1">
    <citation type="journal article" date="2005" name="J. Bacteriol.">
        <title>Whole-genome sequencing of Staphylococcus haemolyticus uncovers the extreme plasticity of its genome and the evolution of human-colonizing staphylococcal species.</title>
        <authorList>
            <person name="Takeuchi F."/>
            <person name="Watanabe S."/>
            <person name="Baba T."/>
            <person name="Yuzawa H."/>
            <person name="Ito T."/>
            <person name="Morimoto Y."/>
            <person name="Kuroda M."/>
            <person name="Cui L."/>
            <person name="Takahashi M."/>
            <person name="Ankai A."/>
            <person name="Baba S."/>
            <person name="Fukui S."/>
            <person name="Lee J.C."/>
            <person name="Hiramatsu K."/>
        </authorList>
    </citation>
    <scope>NUCLEOTIDE SEQUENCE [LARGE SCALE GENOMIC DNA]</scope>
    <source>
        <strain>JCSC1435</strain>
    </source>
</reference>
<proteinExistence type="inferred from homology"/>
<comment type="function">
    <text evidence="1">Digests double-stranded RNA. Involved in the processing of primary rRNA transcript to yield the immediate precursors to the large and small rRNAs (23S and 16S). Processes some mRNAs, and tRNAs when they are encoded in the rRNA operon. Processes pre-crRNA and tracrRNA of type II CRISPR loci if present in the organism.</text>
</comment>
<comment type="catalytic activity">
    <reaction evidence="1">
        <text>Endonucleolytic cleavage to 5'-phosphomonoester.</text>
        <dbReference type="EC" id="3.1.26.3"/>
    </reaction>
</comment>
<comment type="cofactor">
    <cofactor evidence="1">
        <name>Mg(2+)</name>
        <dbReference type="ChEBI" id="CHEBI:18420"/>
    </cofactor>
</comment>
<comment type="subunit">
    <text evidence="1">Homodimer.</text>
</comment>
<comment type="subcellular location">
    <subcellularLocation>
        <location evidence="1">Cytoplasm</location>
    </subcellularLocation>
</comment>
<comment type="similarity">
    <text evidence="1">Belongs to the ribonuclease III family.</text>
</comment>
<feature type="chain" id="PRO_0000228585" description="Ribonuclease 3">
    <location>
        <begin position="1"/>
        <end position="245"/>
    </location>
</feature>
<feature type="domain" description="RNase III" evidence="1">
    <location>
        <begin position="17"/>
        <end position="146"/>
    </location>
</feature>
<feature type="domain" description="DRBM" evidence="1">
    <location>
        <begin position="172"/>
        <end position="241"/>
    </location>
</feature>
<feature type="region of interest" description="Disordered" evidence="2">
    <location>
        <begin position="217"/>
        <end position="245"/>
    </location>
</feature>
<feature type="active site" evidence="1">
    <location>
        <position position="63"/>
    </location>
</feature>
<feature type="active site" evidence="1">
    <location>
        <position position="135"/>
    </location>
</feature>
<feature type="binding site" evidence="1">
    <location>
        <position position="59"/>
    </location>
    <ligand>
        <name>Mg(2+)</name>
        <dbReference type="ChEBI" id="CHEBI:18420"/>
    </ligand>
</feature>
<feature type="binding site" evidence="1">
    <location>
        <position position="132"/>
    </location>
    <ligand>
        <name>Mg(2+)</name>
        <dbReference type="ChEBI" id="CHEBI:18420"/>
    </ligand>
</feature>
<feature type="binding site" evidence="1">
    <location>
        <position position="135"/>
    </location>
    <ligand>
        <name>Mg(2+)</name>
        <dbReference type="ChEBI" id="CHEBI:18420"/>
    </ligand>
</feature>
<gene>
    <name evidence="1" type="primary">rnc</name>
    <name type="ordered locus">SH1681</name>
</gene>